<comment type="similarity">
    <text evidence="1">Belongs to the UPF0125 (RnfH) family.</text>
</comment>
<organism>
    <name type="scientific">Pasteurella multocida (strain Pm70)</name>
    <dbReference type="NCBI Taxonomy" id="272843"/>
    <lineage>
        <taxon>Bacteria</taxon>
        <taxon>Pseudomonadati</taxon>
        <taxon>Pseudomonadota</taxon>
        <taxon>Gammaproteobacteria</taxon>
        <taxon>Pasteurellales</taxon>
        <taxon>Pasteurellaceae</taxon>
        <taxon>Pasteurella</taxon>
    </lineage>
</organism>
<feature type="chain" id="PRO_0000192494" description="UPF0125 protein PM0166">
    <location>
        <begin position="1"/>
        <end position="99"/>
    </location>
</feature>
<proteinExistence type="inferred from homology"/>
<gene>
    <name type="ordered locus">PM0166</name>
</gene>
<dbReference type="EMBL" id="AE004439">
    <property type="protein sequence ID" value="AAK02250.1"/>
    <property type="molecule type" value="Genomic_DNA"/>
</dbReference>
<dbReference type="RefSeq" id="WP_005720534.1">
    <property type="nucleotide sequence ID" value="NC_002663.1"/>
</dbReference>
<dbReference type="SMR" id="Q9CP88"/>
<dbReference type="STRING" id="272843.PM0166"/>
<dbReference type="EnsemblBacteria" id="AAK02250">
    <property type="protein sequence ID" value="AAK02250"/>
    <property type="gene ID" value="PM0166"/>
</dbReference>
<dbReference type="KEGG" id="pmu:PM0166"/>
<dbReference type="HOGENOM" id="CLU_150721_1_0_6"/>
<dbReference type="OrthoDB" id="9796575at2"/>
<dbReference type="Proteomes" id="UP000000809">
    <property type="component" value="Chromosome"/>
</dbReference>
<dbReference type="Gene3D" id="3.10.20.280">
    <property type="entry name" value="RnfH-like"/>
    <property type="match status" value="1"/>
</dbReference>
<dbReference type="HAMAP" id="MF_00460">
    <property type="entry name" value="UPF0125_RnfH"/>
    <property type="match status" value="1"/>
</dbReference>
<dbReference type="InterPro" id="IPR016155">
    <property type="entry name" value="Mopterin_synth/thiamin_S_b"/>
</dbReference>
<dbReference type="InterPro" id="IPR005346">
    <property type="entry name" value="RnfH"/>
</dbReference>
<dbReference type="InterPro" id="IPR037021">
    <property type="entry name" value="RnfH_sf"/>
</dbReference>
<dbReference type="NCBIfam" id="NF002490">
    <property type="entry name" value="PRK01777.1"/>
    <property type="match status" value="1"/>
</dbReference>
<dbReference type="PANTHER" id="PTHR37483">
    <property type="entry name" value="UPF0125 PROTEIN RATB"/>
    <property type="match status" value="1"/>
</dbReference>
<dbReference type="PANTHER" id="PTHR37483:SF1">
    <property type="entry name" value="UPF0125 PROTEIN RATB"/>
    <property type="match status" value="1"/>
</dbReference>
<dbReference type="Pfam" id="PF03658">
    <property type="entry name" value="Ub-RnfH"/>
    <property type="match status" value="1"/>
</dbReference>
<dbReference type="SUPFAM" id="SSF54285">
    <property type="entry name" value="MoaD/ThiS"/>
    <property type="match status" value="1"/>
</dbReference>
<evidence type="ECO:0000305" key="1"/>
<accession>Q9CP88</accession>
<name>Y166_PASMU</name>
<reference key="1">
    <citation type="journal article" date="2001" name="Proc. Natl. Acad. Sci. U.S.A.">
        <title>Complete genomic sequence of Pasteurella multocida Pm70.</title>
        <authorList>
            <person name="May B.J."/>
            <person name="Zhang Q."/>
            <person name="Li L.L."/>
            <person name="Paustian M.L."/>
            <person name="Whittam T.S."/>
            <person name="Kapur V."/>
        </authorList>
    </citation>
    <scope>NUCLEOTIDE SEQUENCE [LARGE SCALE GENOMIC DNA]</scope>
    <source>
        <strain>Pm70</strain>
    </source>
</reference>
<sequence>MAQIKIEIAYAYPERYYLKKLTVEEGTMIQTAILQSGILQQFTEIDLRENKVGIFSRPAKLTDQLKDGDRIEIYRPLLADPKEIRRKRAEQQAAQAKKK</sequence>
<keyword id="KW-1185">Reference proteome</keyword>
<protein>
    <recommendedName>
        <fullName>UPF0125 protein PM0166</fullName>
    </recommendedName>
</protein>